<reference key="1">
    <citation type="journal article" date="1996" name="Plant Mol. Biol.">
        <title>Isolation and analysis of cDNAs encoding tomato cysteine proteases expressed during leaf senescence.</title>
        <authorList>
            <person name="Drake R."/>
            <person name="John I."/>
            <person name="Farrell A."/>
            <person name="Cooper W."/>
            <person name="Schuch W."/>
            <person name="Grierson D."/>
        </authorList>
    </citation>
    <scope>NUCLEOTIDE SEQUENCE [MRNA]</scope>
    <source>
        <strain>cv. Ailsa Craig</strain>
        <tissue>Leaf</tissue>
    </source>
</reference>
<feature type="signal peptide" evidence="5">
    <location>
        <begin position="1"/>
        <end position="16"/>
    </location>
</feature>
<feature type="propeptide" id="PRO_0000026426" description="Activation peptide" evidence="1">
    <location>
        <begin position="17"/>
        <end position="138"/>
    </location>
</feature>
<feature type="chain" id="PRO_0000026427" description="Cysteine proteinase 3">
    <location>
        <begin position="139"/>
        <end position="356"/>
    </location>
</feature>
<feature type="active site" evidence="7">
    <location>
        <position position="163"/>
    </location>
</feature>
<feature type="active site" evidence="8">
    <location>
        <position position="303"/>
    </location>
</feature>
<feature type="active site" evidence="9">
    <location>
        <position position="323"/>
    </location>
</feature>
<feature type="glycosylation site" description="N-linked (GlcNAc...) asparagine" evidence="6">
    <location>
        <position position="123"/>
    </location>
</feature>
<feature type="glycosylation site" description="N-linked (GlcNAc...) asparagine" evidence="6">
    <location>
        <position position="252"/>
    </location>
</feature>
<feature type="disulfide bond" evidence="2">
    <location>
        <begin position="160"/>
        <end position="203"/>
    </location>
</feature>
<feature type="disulfide bond" evidence="3">
    <location>
        <begin position="194"/>
        <end position="236"/>
    </location>
</feature>
<feature type="disulfide bond" evidence="3">
    <location>
        <begin position="294"/>
        <end position="344"/>
    </location>
</feature>
<proteinExistence type="evidence at transcript level"/>
<sequence length="356" mass="38945">MSRLSLVLILVAGLFATALAGPATFADKNPIRQVVFPDELENGILQVVGQTRSALSFARFAIRHRKRYDSVEEIKQRFEIFLDNLKMIRSHNRKGLSYKLGINEFTDLTWDEFRKHKLGASQNCSATTKGNLKLTNVVLPETKDWRKDGIVSPVKAQGKCGSCWTFSTTGALEAAYAQAFGKGISLSEQQLVDCAGAFNNFGCNGGLPSQAFEYIKFNGGLDTEEAYPYTGKNGICKFSQANIGVKVISSVNITLGAEYELKYAVALVRPVSVAFEVVKGFKQYKSGVYASTECGDTPMDVNHAVLAVGYGVENGTPYWLIKNSWGADWGEDGYFKMEMGKNMCGVATCASYPIVA</sequence>
<evidence type="ECO:0000250" key="1">
    <source>
        <dbReference type="UniProtKB" id="P00785"/>
    </source>
</evidence>
<evidence type="ECO:0000250" key="2">
    <source>
        <dbReference type="UniProtKB" id="P07858"/>
    </source>
</evidence>
<evidence type="ECO:0000250" key="3">
    <source>
        <dbReference type="UniProtKB" id="P25250"/>
    </source>
</evidence>
<evidence type="ECO:0000250" key="4">
    <source>
        <dbReference type="UniProtKB" id="P80884"/>
    </source>
</evidence>
<evidence type="ECO:0000255" key="5"/>
<evidence type="ECO:0000255" key="6">
    <source>
        <dbReference type="PROSITE-ProRule" id="PRU00498"/>
    </source>
</evidence>
<evidence type="ECO:0000255" key="7">
    <source>
        <dbReference type="PROSITE-ProRule" id="PRU10088"/>
    </source>
</evidence>
<evidence type="ECO:0000255" key="8">
    <source>
        <dbReference type="PROSITE-ProRule" id="PRU10089"/>
    </source>
</evidence>
<evidence type="ECO:0000255" key="9">
    <source>
        <dbReference type="PROSITE-ProRule" id="PRU10090"/>
    </source>
</evidence>
<evidence type="ECO:0000305" key="10"/>
<dbReference type="EC" id="3.4.22.-" evidence="4"/>
<dbReference type="EMBL" id="Z48736">
    <property type="protein sequence ID" value="CAA88629.1"/>
    <property type="molecule type" value="mRNA"/>
</dbReference>
<dbReference type="PIR" id="S66348">
    <property type="entry name" value="S66348"/>
</dbReference>
<dbReference type="RefSeq" id="NP_001296313.1">
    <property type="nucleotide sequence ID" value="NM_001309384.1"/>
</dbReference>
<dbReference type="SMR" id="Q40143"/>
<dbReference type="FunCoup" id="Q40143">
    <property type="interactions" value="1389"/>
</dbReference>
<dbReference type="STRING" id="4081.Q40143"/>
<dbReference type="MEROPS" id="C01.163"/>
<dbReference type="GlyCosmos" id="Q40143">
    <property type="glycosylation" value="2 sites, No reported glycans"/>
</dbReference>
<dbReference type="PaxDb" id="4081-Solyc07g041900.2.1"/>
<dbReference type="ProMEX" id="Q40143"/>
<dbReference type="GeneID" id="101252505"/>
<dbReference type="KEGG" id="sly:101252505"/>
<dbReference type="eggNOG" id="KOG1543">
    <property type="taxonomic scope" value="Eukaryota"/>
</dbReference>
<dbReference type="HOGENOM" id="CLU_012184_1_2_1"/>
<dbReference type="InParanoid" id="Q40143"/>
<dbReference type="OrthoDB" id="10253408at2759"/>
<dbReference type="PhylomeDB" id="Q40143"/>
<dbReference type="Proteomes" id="UP000004994">
    <property type="component" value="Unplaced"/>
</dbReference>
<dbReference type="GO" id="GO:0005615">
    <property type="term" value="C:extracellular space"/>
    <property type="evidence" value="ECO:0000318"/>
    <property type="project" value="GO_Central"/>
</dbReference>
<dbReference type="GO" id="GO:0005764">
    <property type="term" value="C:lysosome"/>
    <property type="evidence" value="ECO:0000318"/>
    <property type="project" value="GO_Central"/>
</dbReference>
<dbReference type="GO" id="GO:0004197">
    <property type="term" value="F:cysteine-type endopeptidase activity"/>
    <property type="evidence" value="ECO:0000318"/>
    <property type="project" value="GO_Central"/>
</dbReference>
<dbReference type="GO" id="GO:0006955">
    <property type="term" value="P:immune response"/>
    <property type="evidence" value="ECO:0000318"/>
    <property type="project" value="GO_Central"/>
</dbReference>
<dbReference type="GO" id="GO:2001235">
    <property type="term" value="P:positive regulation of apoptotic signaling pathway"/>
    <property type="evidence" value="ECO:0000318"/>
    <property type="project" value="GO_Central"/>
</dbReference>
<dbReference type="GO" id="GO:0051603">
    <property type="term" value="P:proteolysis involved in protein catabolic process"/>
    <property type="evidence" value="ECO:0000318"/>
    <property type="project" value="GO_Central"/>
</dbReference>
<dbReference type="CDD" id="cd02248">
    <property type="entry name" value="Peptidase_C1A"/>
    <property type="match status" value="1"/>
</dbReference>
<dbReference type="FunFam" id="3.90.70.10:FF:000039">
    <property type="entry name" value="Cysteine proteinase 2, putative"/>
    <property type="match status" value="1"/>
</dbReference>
<dbReference type="Gene3D" id="3.90.70.10">
    <property type="entry name" value="Cysteine proteinases"/>
    <property type="match status" value="1"/>
</dbReference>
<dbReference type="InterPro" id="IPR038765">
    <property type="entry name" value="Papain-like_cys_pep_sf"/>
</dbReference>
<dbReference type="InterPro" id="IPR025661">
    <property type="entry name" value="Pept_asp_AS"/>
</dbReference>
<dbReference type="InterPro" id="IPR000169">
    <property type="entry name" value="Pept_cys_AS"/>
</dbReference>
<dbReference type="InterPro" id="IPR025660">
    <property type="entry name" value="Pept_his_AS"/>
</dbReference>
<dbReference type="InterPro" id="IPR013128">
    <property type="entry name" value="Peptidase_C1A"/>
</dbReference>
<dbReference type="InterPro" id="IPR000668">
    <property type="entry name" value="Peptidase_C1A_C"/>
</dbReference>
<dbReference type="InterPro" id="IPR039417">
    <property type="entry name" value="Peptidase_C1A_papain-like"/>
</dbReference>
<dbReference type="InterPro" id="IPR013201">
    <property type="entry name" value="Prot_inhib_I29"/>
</dbReference>
<dbReference type="PANTHER" id="PTHR12411">
    <property type="entry name" value="CYSTEINE PROTEASE FAMILY C1-RELATED"/>
    <property type="match status" value="1"/>
</dbReference>
<dbReference type="Pfam" id="PF08246">
    <property type="entry name" value="Inhibitor_I29"/>
    <property type="match status" value="1"/>
</dbReference>
<dbReference type="Pfam" id="PF00112">
    <property type="entry name" value="Peptidase_C1"/>
    <property type="match status" value="1"/>
</dbReference>
<dbReference type="PRINTS" id="PR00705">
    <property type="entry name" value="PAPAIN"/>
</dbReference>
<dbReference type="SMART" id="SM00848">
    <property type="entry name" value="Inhibitor_I29"/>
    <property type="match status" value="1"/>
</dbReference>
<dbReference type="SMART" id="SM00645">
    <property type="entry name" value="Pept_C1"/>
    <property type="match status" value="1"/>
</dbReference>
<dbReference type="SUPFAM" id="SSF54001">
    <property type="entry name" value="Cysteine proteinases"/>
    <property type="match status" value="1"/>
</dbReference>
<dbReference type="PROSITE" id="PS00640">
    <property type="entry name" value="THIOL_PROTEASE_ASN"/>
    <property type="match status" value="1"/>
</dbReference>
<dbReference type="PROSITE" id="PS00139">
    <property type="entry name" value="THIOL_PROTEASE_CYS"/>
    <property type="match status" value="1"/>
</dbReference>
<dbReference type="PROSITE" id="PS00639">
    <property type="entry name" value="THIOL_PROTEASE_HIS"/>
    <property type="match status" value="1"/>
</dbReference>
<organism>
    <name type="scientific">Solanum lycopersicum</name>
    <name type="common">Tomato</name>
    <name type="synonym">Lycopersicon esculentum</name>
    <dbReference type="NCBI Taxonomy" id="4081"/>
    <lineage>
        <taxon>Eukaryota</taxon>
        <taxon>Viridiplantae</taxon>
        <taxon>Streptophyta</taxon>
        <taxon>Embryophyta</taxon>
        <taxon>Tracheophyta</taxon>
        <taxon>Spermatophyta</taxon>
        <taxon>Magnoliopsida</taxon>
        <taxon>eudicotyledons</taxon>
        <taxon>Gunneridae</taxon>
        <taxon>Pentapetalae</taxon>
        <taxon>asterids</taxon>
        <taxon>lamiids</taxon>
        <taxon>Solanales</taxon>
        <taxon>Solanaceae</taxon>
        <taxon>Solanoideae</taxon>
        <taxon>Solaneae</taxon>
        <taxon>Solanum</taxon>
        <taxon>Solanum subgen. Lycopersicon</taxon>
    </lineage>
</organism>
<keyword id="KW-1015">Disulfide bond</keyword>
<keyword id="KW-0325">Glycoprotein</keyword>
<keyword id="KW-0378">Hydrolase</keyword>
<keyword id="KW-0645">Protease</keyword>
<keyword id="KW-1185">Reference proteome</keyword>
<keyword id="KW-0732">Signal</keyword>
<keyword id="KW-0788">Thiol protease</keyword>
<keyword id="KW-0926">Vacuole</keyword>
<keyword id="KW-0865">Zymogen</keyword>
<gene>
    <name type="primary">CYP-3</name>
</gene>
<comment type="subcellular location">
    <subcellularLocation>
        <location evidence="10">Vacuole</location>
    </subcellularLocation>
</comment>
<comment type="tissue specificity">
    <text>Predominantly expressed in stem and root.</text>
</comment>
<comment type="similarity">
    <text evidence="7 8 9">Belongs to the peptidase C1 family.</text>
</comment>
<name>CYSP3_SOLLC</name>
<accession>Q40143</accession>
<protein>
    <recommendedName>
        <fullName>Cysteine proteinase 3</fullName>
        <ecNumber evidence="4">3.4.22.-</ecNumber>
    </recommendedName>
</protein>